<evidence type="ECO:0000255" key="1">
    <source>
        <dbReference type="HAMAP-Rule" id="MF_00600"/>
    </source>
</evidence>
<gene>
    <name evidence="1" type="primary">groEL</name>
    <name evidence="1" type="synonym">groL</name>
    <name type="ordered locus">plu4134</name>
</gene>
<comment type="function">
    <text evidence="1">Together with its co-chaperonin GroES, plays an essential role in assisting protein folding. The GroEL-GroES system forms a nano-cage that allows encapsulation of the non-native substrate proteins and provides a physical environment optimized to promote and accelerate protein folding.</text>
</comment>
<comment type="catalytic activity">
    <reaction evidence="1">
        <text>ATP + H2O + a folded polypeptide = ADP + phosphate + an unfolded polypeptide.</text>
        <dbReference type="EC" id="5.6.1.7"/>
    </reaction>
</comment>
<comment type="subunit">
    <text evidence="1">Forms a cylinder of 14 subunits composed of two heptameric rings stacked back-to-back. Interacts with the co-chaperonin GroES.</text>
</comment>
<comment type="subcellular location">
    <subcellularLocation>
        <location evidence="1">Cytoplasm</location>
    </subcellularLocation>
</comment>
<comment type="similarity">
    <text evidence="1">Belongs to the chaperonin (HSP60) family.</text>
</comment>
<proteinExistence type="inferred from homology"/>
<organism>
    <name type="scientific">Photorhabdus laumondii subsp. laumondii (strain DSM 15139 / CIP 105565 / TT01)</name>
    <name type="common">Photorhabdus luminescens subsp. laumondii</name>
    <dbReference type="NCBI Taxonomy" id="243265"/>
    <lineage>
        <taxon>Bacteria</taxon>
        <taxon>Pseudomonadati</taxon>
        <taxon>Pseudomonadota</taxon>
        <taxon>Gammaproteobacteria</taxon>
        <taxon>Enterobacterales</taxon>
        <taxon>Morganellaceae</taxon>
        <taxon>Photorhabdus</taxon>
    </lineage>
</organism>
<name>CH60_PHOLL</name>
<accession>Q7MAZ7</accession>
<dbReference type="EC" id="5.6.1.7" evidence="1"/>
<dbReference type="EMBL" id="BX571872">
    <property type="protein sequence ID" value="CAE16506.1"/>
    <property type="molecule type" value="Genomic_DNA"/>
</dbReference>
<dbReference type="RefSeq" id="WP_011148250.1">
    <property type="nucleotide sequence ID" value="NC_005126.1"/>
</dbReference>
<dbReference type="SMR" id="Q7MAZ7"/>
<dbReference type="STRING" id="243265.plu4134"/>
<dbReference type="GeneID" id="48850351"/>
<dbReference type="KEGG" id="plu:plu4134"/>
<dbReference type="eggNOG" id="COG0459">
    <property type="taxonomic scope" value="Bacteria"/>
</dbReference>
<dbReference type="HOGENOM" id="CLU_016503_3_0_6"/>
<dbReference type="OrthoDB" id="9766614at2"/>
<dbReference type="Proteomes" id="UP000002514">
    <property type="component" value="Chromosome"/>
</dbReference>
<dbReference type="GO" id="GO:0005737">
    <property type="term" value="C:cytoplasm"/>
    <property type="evidence" value="ECO:0007669"/>
    <property type="project" value="UniProtKB-SubCell"/>
</dbReference>
<dbReference type="GO" id="GO:0005524">
    <property type="term" value="F:ATP binding"/>
    <property type="evidence" value="ECO:0007669"/>
    <property type="project" value="UniProtKB-UniRule"/>
</dbReference>
<dbReference type="GO" id="GO:0140662">
    <property type="term" value="F:ATP-dependent protein folding chaperone"/>
    <property type="evidence" value="ECO:0007669"/>
    <property type="project" value="InterPro"/>
</dbReference>
<dbReference type="GO" id="GO:0016853">
    <property type="term" value="F:isomerase activity"/>
    <property type="evidence" value="ECO:0007669"/>
    <property type="project" value="UniProtKB-KW"/>
</dbReference>
<dbReference type="GO" id="GO:0051082">
    <property type="term" value="F:unfolded protein binding"/>
    <property type="evidence" value="ECO:0007669"/>
    <property type="project" value="UniProtKB-UniRule"/>
</dbReference>
<dbReference type="GO" id="GO:0042026">
    <property type="term" value="P:protein refolding"/>
    <property type="evidence" value="ECO:0007669"/>
    <property type="project" value="UniProtKB-UniRule"/>
</dbReference>
<dbReference type="CDD" id="cd03344">
    <property type="entry name" value="GroEL"/>
    <property type="match status" value="1"/>
</dbReference>
<dbReference type="FunFam" id="1.10.560.10:FF:000001">
    <property type="entry name" value="60 kDa chaperonin"/>
    <property type="match status" value="1"/>
</dbReference>
<dbReference type="FunFam" id="3.50.7.10:FF:000001">
    <property type="entry name" value="60 kDa chaperonin"/>
    <property type="match status" value="1"/>
</dbReference>
<dbReference type="Gene3D" id="3.50.7.10">
    <property type="entry name" value="GroEL"/>
    <property type="match status" value="1"/>
</dbReference>
<dbReference type="Gene3D" id="1.10.560.10">
    <property type="entry name" value="GroEL-like equatorial domain"/>
    <property type="match status" value="1"/>
</dbReference>
<dbReference type="Gene3D" id="3.30.260.10">
    <property type="entry name" value="TCP-1-like chaperonin intermediate domain"/>
    <property type="match status" value="1"/>
</dbReference>
<dbReference type="HAMAP" id="MF_00600">
    <property type="entry name" value="CH60"/>
    <property type="match status" value="1"/>
</dbReference>
<dbReference type="InterPro" id="IPR018370">
    <property type="entry name" value="Chaperonin_Cpn60_CS"/>
</dbReference>
<dbReference type="InterPro" id="IPR001844">
    <property type="entry name" value="Cpn60/GroEL"/>
</dbReference>
<dbReference type="InterPro" id="IPR002423">
    <property type="entry name" value="Cpn60/GroEL/TCP-1"/>
</dbReference>
<dbReference type="InterPro" id="IPR027409">
    <property type="entry name" value="GroEL-like_apical_dom_sf"/>
</dbReference>
<dbReference type="InterPro" id="IPR027413">
    <property type="entry name" value="GROEL-like_equatorial_sf"/>
</dbReference>
<dbReference type="InterPro" id="IPR027410">
    <property type="entry name" value="TCP-1-like_intermed_sf"/>
</dbReference>
<dbReference type="NCBIfam" id="TIGR02348">
    <property type="entry name" value="GroEL"/>
    <property type="match status" value="1"/>
</dbReference>
<dbReference type="NCBIfam" id="NF000592">
    <property type="entry name" value="PRK00013.1"/>
    <property type="match status" value="1"/>
</dbReference>
<dbReference type="NCBIfam" id="NF009487">
    <property type="entry name" value="PRK12849.1"/>
    <property type="match status" value="1"/>
</dbReference>
<dbReference type="NCBIfam" id="NF009488">
    <property type="entry name" value="PRK12850.1"/>
    <property type="match status" value="1"/>
</dbReference>
<dbReference type="NCBIfam" id="NF009489">
    <property type="entry name" value="PRK12851.1"/>
    <property type="match status" value="1"/>
</dbReference>
<dbReference type="PANTHER" id="PTHR45633">
    <property type="entry name" value="60 KDA HEAT SHOCK PROTEIN, MITOCHONDRIAL"/>
    <property type="match status" value="1"/>
</dbReference>
<dbReference type="Pfam" id="PF00118">
    <property type="entry name" value="Cpn60_TCP1"/>
    <property type="match status" value="1"/>
</dbReference>
<dbReference type="PRINTS" id="PR00298">
    <property type="entry name" value="CHAPERONIN60"/>
</dbReference>
<dbReference type="SUPFAM" id="SSF52029">
    <property type="entry name" value="GroEL apical domain-like"/>
    <property type="match status" value="1"/>
</dbReference>
<dbReference type="SUPFAM" id="SSF48592">
    <property type="entry name" value="GroEL equatorial domain-like"/>
    <property type="match status" value="1"/>
</dbReference>
<dbReference type="SUPFAM" id="SSF54849">
    <property type="entry name" value="GroEL-intermediate domain like"/>
    <property type="match status" value="1"/>
</dbReference>
<dbReference type="PROSITE" id="PS00296">
    <property type="entry name" value="CHAPERONINS_CPN60"/>
    <property type="match status" value="1"/>
</dbReference>
<protein>
    <recommendedName>
        <fullName evidence="1">Chaperonin GroEL</fullName>
        <ecNumber evidence="1">5.6.1.7</ecNumber>
    </recommendedName>
    <alternativeName>
        <fullName evidence="1">60 kDa chaperonin</fullName>
    </alternativeName>
    <alternativeName>
        <fullName evidence="1">Chaperonin-60</fullName>
        <shortName evidence="1">Cpn60</shortName>
    </alternativeName>
</protein>
<feature type="chain" id="PRO_0000063475" description="Chaperonin GroEL">
    <location>
        <begin position="1"/>
        <end position="548"/>
    </location>
</feature>
<feature type="binding site" evidence="1">
    <location>
        <begin position="30"/>
        <end position="33"/>
    </location>
    <ligand>
        <name>ATP</name>
        <dbReference type="ChEBI" id="CHEBI:30616"/>
    </ligand>
</feature>
<feature type="binding site" evidence="1">
    <location>
        <position position="51"/>
    </location>
    <ligand>
        <name>ATP</name>
        <dbReference type="ChEBI" id="CHEBI:30616"/>
    </ligand>
</feature>
<feature type="binding site" evidence="1">
    <location>
        <begin position="87"/>
        <end position="91"/>
    </location>
    <ligand>
        <name>ATP</name>
        <dbReference type="ChEBI" id="CHEBI:30616"/>
    </ligand>
</feature>
<feature type="binding site" evidence="1">
    <location>
        <position position="415"/>
    </location>
    <ligand>
        <name>ATP</name>
        <dbReference type="ChEBI" id="CHEBI:30616"/>
    </ligand>
</feature>
<feature type="binding site" evidence="1">
    <location>
        <position position="495"/>
    </location>
    <ligand>
        <name>ATP</name>
        <dbReference type="ChEBI" id="CHEBI:30616"/>
    </ligand>
</feature>
<keyword id="KW-0067">ATP-binding</keyword>
<keyword id="KW-0143">Chaperone</keyword>
<keyword id="KW-0963">Cytoplasm</keyword>
<keyword id="KW-0413">Isomerase</keyword>
<keyword id="KW-0547">Nucleotide-binding</keyword>
<keyword id="KW-1185">Reference proteome</keyword>
<sequence>MAAKDVKFGSDARVKMLRGVNILADAVKVTLGPKGRNVVLDKSFGAPAITKDGVSVAREIELEDKFENMGAQMVKEVASKANDAAGDGTTTATVLAQSIVTEGLKAVAAGMNPMDLKRGIDKAVVAAVAELKKLSVPCSDSISIAQVGTISANSDETVGKLIAEAMDKVGKEGVITVEEGTGLEDELDVVEGMQFDRGYLSPYFINKPENGSVELENPYILLVDKKISNIRELLPVLEGVAKASKPLLIVAEDVEGEALATLVVNTMRGIVKVAAVKAPGFGDRRKAMLHDIAVLTNGNVISEEIGLELEKATLEDLGQAKRIVINKDTTTIIDGVGEEDAIKGRVSQINQQIKESTSDYDREKLQERVAKLAGGVAVIKVGAATEVEMKEKRARVDDALHATRAAVEEGVVAGGGVALVRVAAAIVGLKGDNEDQNVGIRVAMRAMEAPLRQIVDNSGEEPSVIANSVKAGEGNYGYNATTEQYGDMIAMGILDPTKVTRSALQFAASIAGLMITTECMITDLPKDDKADLGAAGGMGGMGGMGGMM</sequence>
<reference key="1">
    <citation type="journal article" date="2003" name="Nat. Biotechnol.">
        <title>The genome sequence of the entomopathogenic bacterium Photorhabdus luminescens.</title>
        <authorList>
            <person name="Duchaud E."/>
            <person name="Rusniok C."/>
            <person name="Frangeul L."/>
            <person name="Buchrieser C."/>
            <person name="Givaudan A."/>
            <person name="Taourit S."/>
            <person name="Bocs S."/>
            <person name="Boursaux-Eude C."/>
            <person name="Chandler M."/>
            <person name="Charles J.-F."/>
            <person name="Dassa E."/>
            <person name="Derose R."/>
            <person name="Derzelle S."/>
            <person name="Freyssinet G."/>
            <person name="Gaudriault S."/>
            <person name="Medigue C."/>
            <person name="Lanois A."/>
            <person name="Powell K."/>
            <person name="Siguier P."/>
            <person name="Vincent R."/>
            <person name="Wingate V."/>
            <person name="Zouine M."/>
            <person name="Glaser P."/>
            <person name="Boemare N."/>
            <person name="Danchin A."/>
            <person name="Kunst F."/>
        </authorList>
    </citation>
    <scope>NUCLEOTIDE SEQUENCE [LARGE SCALE GENOMIC DNA]</scope>
    <source>
        <strain>DSM 15139 / CIP 105565 / TT01</strain>
    </source>
</reference>